<organism>
    <name type="scientific">Deinococcus geothermalis (strain DSM 11300 / CIP 105573 / AG-3a)</name>
    <dbReference type="NCBI Taxonomy" id="319795"/>
    <lineage>
        <taxon>Bacteria</taxon>
        <taxon>Thermotogati</taxon>
        <taxon>Deinococcota</taxon>
        <taxon>Deinococci</taxon>
        <taxon>Deinococcales</taxon>
        <taxon>Deinococcaceae</taxon>
        <taxon>Deinococcus</taxon>
    </lineage>
</organism>
<feature type="chain" id="PRO_0000252617" description="Glucose-6-phosphate isomerase">
    <location>
        <begin position="1"/>
        <end position="562"/>
    </location>
</feature>
<feature type="active site" description="Proton donor" evidence="1">
    <location>
        <position position="370"/>
    </location>
</feature>
<feature type="active site" evidence="1">
    <location>
        <position position="401"/>
    </location>
</feature>
<feature type="active site" evidence="1">
    <location>
        <position position="526"/>
    </location>
</feature>
<proteinExistence type="inferred from homology"/>
<keyword id="KW-0963">Cytoplasm</keyword>
<keyword id="KW-0312">Gluconeogenesis</keyword>
<keyword id="KW-0324">Glycolysis</keyword>
<keyword id="KW-0413">Isomerase</keyword>
<evidence type="ECO:0000255" key="1">
    <source>
        <dbReference type="HAMAP-Rule" id="MF_00473"/>
    </source>
</evidence>
<evidence type="ECO:0000305" key="2"/>
<protein>
    <recommendedName>
        <fullName evidence="1">Glucose-6-phosphate isomerase</fullName>
        <shortName evidence="1">GPI</shortName>
        <ecNumber evidence="1">5.3.1.9</ecNumber>
    </recommendedName>
    <alternativeName>
        <fullName evidence="1">Phosphoglucose isomerase</fullName>
        <shortName evidence="1">PGI</shortName>
    </alternativeName>
    <alternativeName>
        <fullName evidence="1">Phosphohexose isomerase</fullName>
        <shortName evidence="1">PHI</shortName>
    </alternativeName>
</protein>
<comment type="function">
    <text evidence="1">Catalyzes the reversible isomerization of glucose-6-phosphate to fructose-6-phosphate.</text>
</comment>
<comment type="catalytic activity">
    <reaction evidence="1">
        <text>alpha-D-glucose 6-phosphate = beta-D-fructose 6-phosphate</text>
        <dbReference type="Rhea" id="RHEA:11816"/>
        <dbReference type="ChEBI" id="CHEBI:57634"/>
        <dbReference type="ChEBI" id="CHEBI:58225"/>
        <dbReference type="EC" id="5.3.1.9"/>
    </reaction>
</comment>
<comment type="pathway">
    <text evidence="1">Carbohydrate biosynthesis; gluconeogenesis.</text>
</comment>
<comment type="pathway">
    <text evidence="1">Carbohydrate degradation; glycolysis; D-glyceraldehyde 3-phosphate and glycerone phosphate from D-glucose: step 2/4.</text>
</comment>
<comment type="subcellular location">
    <subcellularLocation>
        <location evidence="1">Cytoplasm</location>
    </subcellularLocation>
</comment>
<comment type="similarity">
    <text evidence="1">Belongs to the GPI family.</text>
</comment>
<comment type="sequence caution" evidence="2">
    <conflict type="erroneous initiation">
        <sequence resource="EMBL-CDS" id="ABF45600"/>
    </conflict>
</comment>
<gene>
    <name evidence="1" type="primary">pgi</name>
    <name type="ordered locus">Dgeo_1304</name>
</gene>
<dbReference type="EC" id="5.3.1.9" evidence="1"/>
<dbReference type="EMBL" id="CP000359">
    <property type="protein sequence ID" value="ABF45600.1"/>
    <property type="status" value="ALT_INIT"/>
    <property type="molecule type" value="Genomic_DNA"/>
</dbReference>
<dbReference type="RefSeq" id="WP_041221160.1">
    <property type="nucleotide sequence ID" value="NC_008025.1"/>
</dbReference>
<dbReference type="SMR" id="Q1IYT4"/>
<dbReference type="STRING" id="319795.Dgeo_1304"/>
<dbReference type="KEGG" id="dge:Dgeo_1304"/>
<dbReference type="eggNOG" id="COG0166">
    <property type="taxonomic scope" value="Bacteria"/>
</dbReference>
<dbReference type="HOGENOM" id="CLU_017947_3_1_0"/>
<dbReference type="UniPathway" id="UPA00109">
    <property type="reaction ID" value="UER00181"/>
</dbReference>
<dbReference type="UniPathway" id="UPA00138"/>
<dbReference type="Proteomes" id="UP000002431">
    <property type="component" value="Chromosome"/>
</dbReference>
<dbReference type="GO" id="GO:0005829">
    <property type="term" value="C:cytosol"/>
    <property type="evidence" value="ECO:0007669"/>
    <property type="project" value="TreeGrafter"/>
</dbReference>
<dbReference type="GO" id="GO:0097367">
    <property type="term" value="F:carbohydrate derivative binding"/>
    <property type="evidence" value="ECO:0007669"/>
    <property type="project" value="InterPro"/>
</dbReference>
<dbReference type="GO" id="GO:0004347">
    <property type="term" value="F:glucose-6-phosphate isomerase activity"/>
    <property type="evidence" value="ECO:0007669"/>
    <property type="project" value="UniProtKB-UniRule"/>
</dbReference>
<dbReference type="GO" id="GO:0048029">
    <property type="term" value="F:monosaccharide binding"/>
    <property type="evidence" value="ECO:0007669"/>
    <property type="project" value="TreeGrafter"/>
</dbReference>
<dbReference type="GO" id="GO:0006094">
    <property type="term" value="P:gluconeogenesis"/>
    <property type="evidence" value="ECO:0007669"/>
    <property type="project" value="UniProtKB-UniRule"/>
</dbReference>
<dbReference type="GO" id="GO:0051156">
    <property type="term" value="P:glucose 6-phosphate metabolic process"/>
    <property type="evidence" value="ECO:0007669"/>
    <property type="project" value="TreeGrafter"/>
</dbReference>
<dbReference type="GO" id="GO:0006096">
    <property type="term" value="P:glycolytic process"/>
    <property type="evidence" value="ECO:0007669"/>
    <property type="project" value="UniProtKB-UniRule"/>
</dbReference>
<dbReference type="CDD" id="cd05015">
    <property type="entry name" value="SIS_PGI_1"/>
    <property type="match status" value="1"/>
</dbReference>
<dbReference type="CDD" id="cd05016">
    <property type="entry name" value="SIS_PGI_2"/>
    <property type="match status" value="1"/>
</dbReference>
<dbReference type="FunFam" id="1.10.1390.10:FF:000001">
    <property type="entry name" value="Glucose-6-phosphate isomerase"/>
    <property type="match status" value="1"/>
</dbReference>
<dbReference type="FunFam" id="3.40.50.10490:FF:000018">
    <property type="entry name" value="Glucose-6-phosphate isomerase"/>
    <property type="match status" value="1"/>
</dbReference>
<dbReference type="Gene3D" id="1.10.1390.10">
    <property type="match status" value="1"/>
</dbReference>
<dbReference type="Gene3D" id="3.40.50.10490">
    <property type="entry name" value="Glucose-6-phosphate isomerase like protein, domain 1"/>
    <property type="match status" value="2"/>
</dbReference>
<dbReference type="HAMAP" id="MF_00473">
    <property type="entry name" value="G6P_isomerase"/>
    <property type="match status" value="1"/>
</dbReference>
<dbReference type="InterPro" id="IPR001672">
    <property type="entry name" value="G6P_Isomerase"/>
</dbReference>
<dbReference type="InterPro" id="IPR023096">
    <property type="entry name" value="G6P_Isomerase_C"/>
</dbReference>
<dbReference type="InterPro" id="IPR018189">
    <property type="entry name" value="Phosphoglucose_isomerase_CS"/>
</dbReference>
<dbReference type="InterPro" id="IPR046348">
    <property type="entry name" value="SIS_dom_sf"/>
</dbReference>
<dbReference type="InterPro" id="IPR035476">
    <property type="entry name" value="SIS_PGI_1"/>
</dbReference>
<dbReference type="InterPro" id="IPR035482">
    <property type="entry name" value="SIS_PGI_2"/>
</dbReference>
<dbReference type="NCBIfam" id="NF001211">
    <property type="entry name" value="PRK00179.1"/>
    <property type="match status" value="1"/>
</dbReference>
<dbReference type="PANTHER" id="PTHR11469">
    <property type="entry name" value="GLUCOSE-6-PHOSPHATE ISOMERASE"/>
    <property type="match status" value="1"/>
</dbReference>
<dbReference type="PANTHER" id="PTHR11469:SF1">
    <property type="entry name" value="GLUCOSE-6-PHOSPHATE ISOMERASE"/>
    <property type="match status" value="1"/>
</dbReference>
<dbReference type="Pfam" id="PF00342">
    <property type="entry name" value="PGI"/>
    <property type="match status" value="1"/>
</dbReference>
<dbReference type="PRINTS" id="PR00662">
    <property type="entry name" value="G6PISOMERASE"/>
</dbReference>
<dbReference type="SUPFAM" id="SSF53697">
    <property type="entry name" value="SIS domain"/>
    <property type="match status" value="1"/>
</dbReference>
<dbReference type="PROSITE" id="PS00765">
    <property type="entry name" value="P_GLUCOSE_ISOMERASE_1"/>
    <property type="match status" value="1"/>
</dbReference>
<dbReference type="PROSITE" id="PS00174">
    <property type="entry name" value="P_GLUCOSE_ISOMERASE_2"/>
    <property type="match status" value="1"/>
</dbReference>
<dbReference type="PROSITE" id="PS51463">
    <property type="entry name" value="P_GLUCOSE_ISOMERASE_3"/>
    <property type="match status" value="1"/>
</dbReference>
<accession>Q1IYT4</accession>
<sequence length="562" mass="62251">MRDSSSPARPSLTQLPAWQALKSHFETMRDRHLRDLFAADPRRGERLVAEGAGVYLDYSKNRITDETLRLLLQLAREAGVEARRDAMFAGERINLTENRAVLHSALRAPRGAAVTVDGTNVVQEVQEVLDRMSAFADRVRAGTWLGATGKPIRNIVNIGIGGSDLGPVMAYEALKFYADRRLTLRFVSNVDGTDLVEKTRDLDPAETLFIVSSKTFTTLETMANAQSARAWLLAGLENVPDENAAIARPIISRHFVAVSTNAAEVERFGIDTANMFGFWDWVGGRYSVDSAIGLSLMIAIGPNGFRDFLAGFHAMDEHFRSAPLEQNLPVLLGVLGVWYRNFFGAQTYAVLPYDQYLAYFPTYLQQLDMESNGKHVTLDGQPVDYDTGPVVWGQPGTNGQHAFYQLIHQGTTLIPCDFLGFCQTLNPLPTPGGPSHHDLLMANMFAQTEALAFGKSLEQVQAEGVAADLAPHRVFEGNRPTNTLLLDRLTPRTLGTLIALYEHKVFVQGAIWNINSFDQWGVELGKVLASKIVPELEAPGEPELKHDSSTNALIRRYRARRR</sequence>
<name>G6PI_DEIGD</name>
<reference key="1">
    <citation type="submission" date="2006-04" db="EMBL/GenBank/DDBJ databases">
        <title>Complete sequence of chromosome of Deinococcus geothermalis DSM 11300.</title>
        <authorList>
            <person name="Copeland A."/>
            <person name="Lucas S."/>
            <person name="Lapidus A."/>
            <person name="Barry K."/>
            <person name="Detter J.C."/>
            <person name="Glavina del Rio T."/>
            <person name="Hammon N."/>
            <person name="Israni S."/>
            <person name="Dalin E."/>
            <person name="Tice H."/>
            <person name="Pitluck S."/>
            <person name="Brettin T."/>
            <person name="Bruce D."/>
            <person name="Han C."/>
            <person name="Tapia R."/>
            <person name="Saunders E."/>
            <person name="Gilna P."/>
            <person name="Schmutz J."/>
            <person name="Larimer F."/>
            <person name="Land M."/>
            <person name="Hauser L."/>
            <person name="Kyrpides N."/>
            <person name="Kim E."/>
            <person name="Daly M.J."/>
            <person name="Fredrickson J.K."/>
            <person name="Makarova K.S."/>
            <person name="Gaidamakova E.K."/>
            <person name="Zhai M."/>
            <person name="Richardson P."/>
        </authorList>
    </citation>
    <scope>NUCLEOTIDE SEQUENCE [LARGE SCALE GENOMIC DNA]</scope>
    <source>
        <strain>DSM 11300 / CIP 105573 / AG-3a</strain>
    </source>
</reference>